<dbReference type="EMBL" id="AY653733">
    <property type="protein sequence ID" value="AAV50962.1"/>
    <property type="molecule type" value="Genomic_DNA"/>
</dbReference>
<dbReference type="KEGG" id="vg:9925355"/>
<dbReference type="OrthoDB" id="6475at10239"/>
<dbReference type="Proteomes" id="UP000001134">
    <property type="component" value="Genome"/>
</dbReference>
<dbReference type="Gene3D" id="1.10.510.10">
    <property type="entry name" value="Transferase(Phosphotransferase) domain 1"/>
    <property type="match status" value="1"/>
</dbReference>
<dbReference type="InterPro" id="IPR004147">
    <property type="entry name" value="ABC1_dom"/>
</dbReference>
<dbReference type="InterPro" id="IPR011009">
    <property type="entry name" value="Kinase-like_dom_sf"/>
</dbReference>
<dbReference type="Pfam" id="PF03109">
    <property type="entry name" value="ABC1"/>
    <property type="match status" value="1"/>
</dbReference>
<dbReference type="SUPFAM" id="SSF56112">
    <property type="entry name" value="Protein kinase-like (PK-like)"/>
    <property type="match status" value="1"/>
</dbReference>
<gene>
    <name type="ordered locus">MIMI_L702</name>
</gene>
<proteinExistence type="predicted"/>
<organismHost>
    <name type="scientific">Acanthamoeba polyphaga</name>
    <name type="common">Amoeba</name>
    <dbReference type="NCBI Taxonomy" id="5757"/>
</organismHost>
<keyword id="KW-1185">Reference proteome</keyword>
<feature type="chain" id="PRO_0000309198" description="Uncharacterized protein L702">
    <location>
        <begin position="1"/>
        <end position="764"/>
    </location>
</feature>
<accession>Q5UNW6</accession>
<protein>
    <recommendedName>
        <fullName>Uncharacterized protein L702</fullName>
    </recommendedName>
</protein>
<name>YL702_MIMIV</name>
<reference key="1">
    <citation type="journal article" date="2004" name="Science">
        <title>The 1.2-megabase genome sequence of Mimivirus.</title>
        <authorList>
            <person name="Raoult D."/>
            <person name="Audic S."/>
            <person name="Robert C."/>
            <person name="Abergel C."/>
            <person name="Renesto P."/>
            <person name="Ogata H."/>
            <person name="La Scola B."/>
            <person name="Susan M."/>
            <person name="Claverie J.-M."/>
        </authorList>
    </citation>
    <scope>NUCLEOTIDE SEQUENCE [LARGE SCALE GENOMIC DNA]</scope>
    <source>
        <strain>Rowbotham-Bradford</strain>
    </source>
</reference>
<sequence>MSTSCLNLIKKLSLAIEETNDEIINNMTQNGIKYDWLCIKNNVTYDFYYKSLKNRLQLVVEEYLMSSSKQMNFDSLSLSEIEPKQFELQFDVSQNINNFIRLIHSQDNNNFIDVFVHLLSKYKAKYGESLFPNEPIKTIDFIKNFYGKFNSELNSLNCTDCSSLKQTMCTCIIEKICGLYGLSINVSDQVNGIIPEDLHSVKILFTEIIKHYYENLHPIIWAQIILGILKDIFIELPTNREEFIKFIISRIIMNSGPLIFKIIQFIKPMLSVEIAKKYDLTRLSYPMLPEKSVEIIMKKIIINPETIDIIENYSASVGHVCKVIKLDDAENPFIIKIIKPLAVTQSCWEYKILHNLFPKNTCEHDFINAMLESNGREFNILNEVSNTNKGHDLYTDNYRNVFGLDINAVITTPKNISGVIKHDCWFAFAMELAPGISLQKLIDNNSFQTDTEYRAKLHRCLDLLVYKFFYNIVKNGFFHNDLHAGNIFFSHQLSQLTLIDFGSVSEINIFSSNTDSKSVLEIIIMSIFYNYDGILDVISGIINNKCPINQIIQSKNYDDFKKKLYDYRCNNIKNSPIDNINQKIITDNIFGFNRISTEKDLFIDNHSKGTISDSIYRHIDKQYFDKEIDIINEPKKSRELEYPKKIIIENKDILSMSNENMDSNTNITFTFVLDLIMKFYSEHNINIAVRFIEFYNLQRAYCLLLGVLHKSNYSSYRLYHIISKSIMNWSNFQSLFNVKNTYYLLTVYQREKTVYNKLLKQLID</sequence>
<organism>
    <name type="scientific">Acanthamoeba polyphaga mimivirus</name>
    <name type="common">APMV</name>
    <dbReference type="NCBI Taxonomy" id="212035"/>
    <lineage>
        <taxon>Viruses</taxon>
        <taxon>Varidnaviria</taxon>
        <taxon>Bamfordvirae</taxon>
        <taxon>Nucleocytoviricota</taxon>
        <taxon>Megaviricetes</taxon>
        <taxon>Imitervirales</taxon>
        <taxon>Mimiviridae</taxon>
        <taxon>Megamimivirinae</taxon>
        <taxon>Mimivirus</taxon>
        <taxon>Mimivirus bradfordmassiliense</taxon>
    </lineage>
</organism>